<organism>
    <name type="scientific">Staphylococcus haemolyticus (strain JCSC1435)</name>
    <dbReference type="NCBI Taxonomy" id="279808"/>
    <lineage>
        <taxon>Bacteria</taxon>
        <taxon>Bacillati</taxon>
        <taxon>Bacillota</taxon>
        <taxon>Bacilli</taxon>
        <taxon>Bacillales</taxon>
        <taxon>Staphylococcaceae</taxon>
        <taxon>Staphylococcus</taxon>
    </lineage>
</organism>
<sequence>MSVDNNNKAKQAYNNQTGVNEKEREEQQKQAEQYREQNEQQQFENKLTFSDEVVEKIAGIAAREVKGILDMKGGFADNFTNAFSSGNNVTTGVSVEVGEKQAAIDLKVILEYGESAPKIFRKVTELVKEQVKYITGLQVVEVNMQVDDVMTKKEWQQKNEKNNNNNNNNSERSGLQ</sequence>
<evidence type="ECO:0000250" key="1"/>
<evidence type="ECO:0000256" key="2">
    <source>
        <dbReference type="SAM" id="MobiDB-lite"/>
    </source>
</evidence>
<evidence type="ECO:0000305" key="3"/>
<proteinExistence type="inferred from homology"/>
<protein>
    <recommendedName>
        <fullName>Alkaline shock protein 23</fullName>
    </recommendedName>
</protein>
<comment type="function">
    <text evidence="1">May play a key role in alkaline pH tolerance.</text>
</comment>
<comment type="similarity">
    <text evidence="3">Belongs to the asp23 family.</text>
</comment>
<reference key="1">
    <citation type="journal article" date="2005" name="J. Bacteriol.">
        <title>Whole-genome sequencing of Staphylococcus haemolyticus uncovers the extreme plasticity of its genome and the evolution of human-colonizing staphylococcal species.</title>
        <authorList>
            <person name="Takeuchi F."/>
            <person name="Watanabe S."/>
            <person name="Baba T."/>
            <person name="Yuzawa H."/>
            <person name="Ito T."/>
            <person name="Morimoto Y."/>
            <person name="Kuroda M."/>
            <person name="Cui L."/>
            <person name="Takahashi M."/>
            <person name="Ankai A."/>
            <person name="Baba S."/>
            <person name="Fukui S."/>
            <person name="Lee J.C."/>
            <person name="Hiramatsu K."/>
        </authorList>
    </citation>
    <scope>NUCLEOTIDE SEQUENCE [LARGE SCALE GENOMIC DNA]</scope>
    <source>
        <strain>JCSC1435</strain>
    </source>
</reference>
<name>ASP23_STAHJ</name>
<feature type="chain" id="PRO_0000296117" description="Alkaline shock protein 23">
    <location>
        <begin position="1"/>
        <end position="176"/>
    </location>
</feature>
<feature type="region of interest" description="Disordered" evidence="2">
    <location>
        <begin position="1"/>
        <end position="43"/>
    </location>
</feature>
<feature type="region of interest" description="Disordered" evidence="2">
    <location>
        <begin position="154"/>
        <end position="176"/>
    </location>
</feature>
<feature type="compositionally biased region" description="Low complexity" evidence="2">
    <location>
        <begin position="1"/>
        <end position="16"/>
    </location>
</feature>
<feature type="compositionally biased region" description="Basic and acidic residues" evidence="2">
    <location>
        <begin position="20"/>
        <end position="38"/>
    </location>
</feature>
<dbReference type="EMBL" id="AP006716">
    <property type="protein sequence ID" value="BAE04165.1"/>
    <property type="molecule type" value="Genomic_DNA"/>
</dbReference>
<dbReference type="RefSeq" id="WP_011275168.1">
    <property type="nucleotide sequence ID" value="NC_007168.1"/>
</dbReference>
<dbReference type="KEGG" id="sha:SH0856"/>
<dbReference type="eggNOG" id="COG1302">
    <property type="taxonomic scope" value="Bacteria"/>
</dbReference>
<dbReference type="HOGENOM" id="CLU_113198_1_1_9"/>
<dbReference type="OrthoDB" id="9808942at2"/>
<dbReference type="Proteomes" id="UP000000543">
    <property type="component" value="Chromosome"/>
</dbReference>
<dbReference type="InterPro" id="IPR005531">
    <property type="entry name" value="Asp23"/>
</dbReference>
<dbReference type="PANTHER" id="PTHR34297:SF3">
    <property type="entry name" value="ALKALINE SHOCK PROTEIN 23"/>
    <property type="match status" value="1"/>
</dbReference>
<dbReference type="PANTHER" id="PTHR34297">
    <property type="entry name" value="HYPOTHETICAL CYTOSOLIC PROTEIN-RELATED"/>
    <property type="match status" value="1"/>
</dbReference>
<dbReference type="Pfam" id="PF03780">
    <property type="entry name" value="Asp23"/>
    <property type="match status" value="1"/>
</dbReference>
<gene>
    <name type="primary">asp23</name>
    <name type="ordered locus">SH0856</name>
</gene>
<accession>Q4L860</accession>